<keyword id="KW-0002">3D-structure</keyword>
<keyword id="KW-0378">Hydrolase</keyword>
<keyword id="KW-0472">Membrane</keyword>
<keyword id="KW-1185">Reference proteome</keyword>
<keyword id="KW-0812">Transmembrane</keyword>
<keyword id="KW-1133">Transmembrane helix</keyword>
<keyword id="KW-0843">Virulence</keyword>
<dbReference type="EC" id="3.2.2.5" evidence="2"/>
<dbReference type="EMBL" id="AE004091">
    <property type="protein sequence ID" value="AAG03483.1"/>
    <property type="molecule type" value="Genomic_DNA"/>
</dbReference>
<dbReference type="PIR" id="B83633">
    <property type="entry name" value="B83633"/>
</dbReference>
<dbReference type="RefSeq" id="NP_248783.1">
    <property type="nucleotide sequence ID" value="NC_002516.2"/>
</dbReference>
<dbReference type="RefSeq" id="WP_003115074.1">
    <property type="nucleotide sequence ID" value="NZ_QZGE01000015.1"/>
</dbReference>
<dbReference type="PDB" id="4ZV0">
    <property type="method" value="X-ray"/>
    <property type="resolution" value="1.40 A"/>
    <property type="chains" value="A=282-430"/>
</dbReference>
<dbReference type="PDB" id="4ZV4">
    <property type="method" value="X-ray"/>
    <property type="resolution" value="3.50 A"/>
    <property type="chains" value="C/D=265-430"/>
</dbReference>
<dbReference type="PDB" id="6OX6">
    <property type="method" value="X-ray"/>
    <property type="resolution" value="2.17 A"/>
    <property type="chains" value="A=22-373"/>
</dbReference>
<dbReference type="PDB" id="6XRF">
    <property type="method" value="X-ray"/>
    <property type="resolution" value="2.56 A"/>
    <property type="chains" value="C/F/I=1-60"/>
</dbReference>
<dbReference type="PDBsum" id="4ZV0"/>
<dbReference type="PDBsum" id="4ZV4"/>
<dbReference type="PDBsum" id="6OX6"/>
<dbReference type="PDBsum" id="6XRF"/>
<dbReference type="EMDB" id="EMD-3112"/>
<dbReference type="EMDB" id="EMD-3113"/>
<dbReference type="SMR" id="Q9I739"/>
<dbReference type="STRING" id="208964.PA0093"/>
<dbReference type="PaxDb" id="208964-PA0093"/>
<dbReference type="GeneID" id="880654"/>
<dbReference type="KEGG" id="pae:PA0093"/>
<dbReference type="PATRIC" id="fig|208964.12.peg.97"/>
<dbReference type="PseudoCAP" id="PA0093"/>
<dbReference type="HOGENOM" id="CLU_037199_0_0_6"/>
<dbReference type="InParanoid" id="Q9I739"/>
<dbReference type="OrthoDB" id="9807902at2"/>
<dbReference type="BioCyc" id="PAER208964:G1FZ6-95-MONOMER"/>
<dbReference type="BRENDA" id="3.2.2.5">
    <property type="organism ID" value="5087"/>
</dbReference>
<dbReference type="EvolutionaryTrace" id="Q9I739"/>
<dbReference type="Proteomes" id="UP000002438">
    <property type="component" value="Chromosome"/>
</dbReference>
<dbReference type="GO" id="GO:0016020">
    <property type="term" value="C:membrane"/>
    <property type="evidence" value="ECO:0007669"/>
    <property type="project" value="UniProtKB-SubCell"/>
</dbReference>
<dbReference type="GO" id="GO:0003953">
    <property type="term" value="F:NAD+ nucleosidase activity"/>
    <property type="evidence" value="ECO:0007669"/>
    <property type="project" value="UniProtKB-EC"/>
</dbReference>
<dbReference type="GO" id="GO:0050135">
    <property type="term" value="F:NADP+ nucleosidase activity"/>
    <property type="evidence" value="ECO:0000314"/>
    <property type="project" value="PseudoCAP"/>
</dbReference>
<dbReference type="GO" id="GO:0097351">
    <property type="term" value="F:toxin sequestering activity"/>
    <property type="evidence" value="ECO:0000315"/>
    <property type="project" value="PseudoCAP"/>
</dbReference>
<dbReference type="GO" id="GO:0033103">
    <property type="term" value="P:protein secretion by the type VI secretion system"/>
    <property type="evidence" value="ECO:0000314"/>
    <property type="project" value="PseudoCAP"/>
</dbReference>
<dbReference type="CDD" id="cd14742">
    <property type="entry name" value="PAAR_RHS"/>
    <property type="match status" value="1"/>
</dbReference>
<dbReference type="Gene3D" id="2.60.200.60">
    <property type="match status" value="1"/>
</dbReference>
<dbReference type="InterPro" id="IPR028238">
    <property type="entry name" value="Ntox46"/>
</dbReference>
<dbReference type="InterPro" id="IPR008727">
    <property type="entry name" value="PAAR_motif"/>
</dbReference>
<dbReference type="Pfam" id="PF15538">
    <property type="entry name" value="Ntox46"/>
    <property type="match status" value="1"/>
</dbReference>
<dbReference type="Pfam" id="PF05488">
    <property type="entry name" value="PAAR_motif"/>
    <property type="match status" value="1"/>
</dbReference>
<sequence length="430" mass="44738">MDAQAAARLGDEIAHGFGVAAMVAGAVAGALIGAAVVAATAATGGLAAVILAGSIAAGGLSMFQIVKGLTTIFELPEPTTGVLIRGSFNVYVNSRNAMRAGDDVSATCSGLPLNHPLWPFPVLIAEGSATVYINGKPAARLQSKMVCGAHIKTGSQNTFIGGPTERVAFVLDLEEWLHTGLEALGLAALAGGLLLAAMAGVAALVGVVAIGGLMMGGMALLGDLGDRLGPGYRDLFQGVAGMALLGFGPKLAGRRPAAVTSETAQRRAYLNNKFGRSGNLDHDINYRGNRETAAKFFKSKDIDPADAESYMNGLDFNHPVRVETLAPGKNLWQYQSPGAPQGNWYTLSPRVQPTELGINPMGTNRAANTIEPKVLNSYRTTQKVEVLRSTAAPTDDFWSVKGQSYPAKGGAQQLFSNEKGSFGLLPREGS</sequence>
<organism>
    <name type="scientific">Pseudomonas aeruginosa (strain ATCC 15692 / DSM 22644 / CIP 104116 / JCM 14847 / LMG 12228 / 1C / PRS 101 / PAO1)</name>
    <dbReference type="NCBI Taxonomy" id="208964"/>
    <lineage>
        <taxon>Bacteria</taxon>
        <taxon>Pseudomonadati</taxon>
        <taxon>Pseudomonadota</taxon>
        <taxon>Gammaproteobacteria</taxon>
        <taxon>Pseudomonadales</taxon>
        <taxon>Pseudomonadaceae</taxon>
        <taxon>Pseudomonas</taxon>
    </lineage>
</organism>
<name>TSE6_PSEAE</name>
<reference key="1">
    <citation type="journal article" date="2000" name="Nature">
        <title>Complete genome sequence of Pseudomonas aeruginosa PAO1, an opportunistic pathogen.</title>
        <authorList>
            <person name="Stover C.K."/>
            <person name="Pham X.-Q.T."/>
            <person name="Erwin A.L."/>
            <person name="Mizoguchi S.D."/>
            <person name="Warrener P."/>
            <person name="Hickey M.J."/>
            <person name="Brinkman F.S.L."/>
            <person name="Hufnagle W.O."/>
            <person name="Kowalik D.J."/>
            <person name="Lagrou M."/>
            <person name="Garber R.L."/>
            <person name="Goltry L."/>
            <person name="Tolentino E."/>
            <person name="Westbrock-Wadman S."/>
            <person name="Yuan Y."/>
            <person name="Brody L.L."/>
            <person name="Coulter S.N."/>
            <person name="Folger K.R."/>
            <person name="Kas A."/>
            <person name="Larbig K."/>
            <person name="Lim R.M."/>
            <person name="Smith K.A."/>
            <person name="Spencer D.H."/>
            <person name="Wong G.K.-S."/>
            <person name="Wu Z."/>
            <person name="Paulsen I.T."/>
            <person name="Reizer J."/>
            <person name="Saier M.H. Jr."/>
            <person name="Hancock R.E.W."/>
            <person name="Lory S."/>
            <person name="Olson M.V."/>
        </authorList>
    </citation>
    <scope>NUCLEOTIDE SEQUENCE [LARGE SCALE GENOMIC DNA]</scope>
    <source>
        <strain>ATCC 15692 / DSM 22644 / CIP 104116 / JCM 14847 / LMG 12228 / 1C / PRS 101 / PAO1</strain>
    </source>
</reference>
<reference evidence="5 6" key="2">
    <citation type="journal article" date="2015" name="Cell">
        <title>An interbacterial NAD(P)(+) glycohydrolase toxin requires elongation factor Tu for delivery to target cells.</title>
        <authorList>
            <person name="Whitney J.C."/>
            <person name="Quentin D."/>
            <person name="Sawai S."/>
            <person name="LeRoux M."/>
            <person name="Harding B.N."/>
            <person name="Ledvina H.E."/>
            <person name="Tran B.Q."/>
            <person name="Robinson H."/>
            <person name="Goo Y.A."/>
            <person name="Goodlett D.R."/>
            <person name="Raunser S."/>
            <person name="Mougous J.D."/>
        </authorList>
    </citation>
    <scope>X-RAY CRYSTALLOGRAPHY (1.40 ANGSTROMS) OF 282-430</scope>
    <scope>FUNCTION</scope>
    <scope>CATALYTIC ACTIVITY</scope>
    <scope>INTERACTION WITH TSI6; VGRG1; EAGT6 AND EF-TU</scope>
    <scope>MUTAGENESIS OF LEU-270 AND ASP-396</scope>
</reference>
<reference key="3">
    <citation type="journal article" date="2018" name="Nat. Microbiol.">
        <title>Mechanism of loading and translocation of type VI secretion system effector Tse6.</title>
        <authorList>
            <person name="Quentin D."/>
            <person name="Ahmad S."/>
            <person name="Shanthamoorthy P."/>
            <person name="Mougous J.D."/>
            <person name="Whitney J.C."/>
            <person name="Raunser S."/>
        </authorList>
    </citation>
    <scope>FUNCTION</scope>
    <scope>INTERACTION WITH EAGT6</scope>
</reference>
<protein>
    <recommendedName>
        <fullName evidence="4">NAD(P)(+) glycohydrolase toxin Tse6</fullName>
        <ecNumber evidence="2">3.2.2.5</ecNumber>
    </recommendedName>
</protein>
<proteinExistence type="evidence at protein level"/>
<gene>
    <name evidence="4" type="primary">tse6</name>
    <name type="ordered locus">PA0093</name>
</gene>
<feature type="chain" id="PRO_0000449108" description="NAD(P)(+) glycohydrolase toxin Tse6">
    <location>
        <begin position="1"/>
        <end position="430"/>
    </location>
</feature>
<feature type="transmembrane region" description="Helical" evidence="1">
    <location>
        <begin position="17"/>
        <end position="37"/>
    </location>
</feature>
<feature type="transmembrane region" description="Helical" evidence="1">
    <location>
        <begin position="46"/>
        <end position="66"/>
    </location>
</feature>
<feature type="transmembrane region" description="Helical" evidence="1">
    <location>
        <begin position="193"/>
        <end position="213"/>
    </location>
</feature>
<feature type="mutagenesis site" description="Complete loss of interaction with EF-Tu." evidence="2">
    <original>L</original>
    <variation>E</variation>
    <location>
        <position position="270"/>
    </location>
</feature>
<feature type="mutagenesis site" description="Approximately 225-fold loss of NAD(P)+ glycohydrolase activity." evidence="2">
    <original>D</original>
    <variation>A</variation>
    <location>
        <position position="396"/>
    </location>
</feature>
<feature type="helix" evidence="9">
    <location>
        <begin position="3"/>
        <end position="14"/>
    </location>
</feature>
<feature type="helix" evidence="9">
    <location>
        <begin position="19"/>
        <end position="22"/>
    </location>
</feature>
<feature type="helix" evidence="9">
    <location>
        <begin position="25"/>
        <end position="37"/>
    </location>
</feature>
<feature type="helix" evidence="9">
    <location>
        <begin position="45"/>
        <end position="57"/>
    </location>
</feature>
<feature type="helix" evidence="8">
    <location>
        <begin position="270"/>
        <end position="274"/>
    </location>
</feature>
<feature type="helix" evidence="7">
    <location>
        <begin position="284"/>
        <end position="299"/>
    </location>
</feature>
<feature type="helix" evidence="7">
    <location>
        <begin position="304"/>
        <end position="312"/>
    </location>
</feature>
<feature type="strand" evidence="7">
    <location>
        <begin position="321"/>
        <end position="325"/>
    </location>
</feature>
<feature type="strand" evidence="7">
    <location>
        <begin position="330"/>
        <end position="335"/>
    </location>
</feature>
<feature type="strand" evidence="7">
    <location>
        <begin position="343"/>
        <end position="347"/>
    </location>
</feature>
<feature type="helix" evidence="7">
    <location>
        <begin position="354"/>
        <end position="356"/>
    </location>
</feature>
<feature type="strand" evidence="7">
    <location>
        <begin position="360"/>
        <end position="364"/>
    </location>
</feature>
<feature type="turn" evidence="7">
    <location>
        <begin position="365"/>
        <end position="368"/>
    </location>
</feature>
<feature type="strand" evidence="7">
    <location>
        <begin position="369"/>
        <end position="372"/>
    </location>
</feature>
<feature type="strand" evidence="7">
    <location>
        <begin position="374"/>
        <end position="380"/>
    </location>
</feature>
<feature type="strand" evidence="7">
    <location>
        <begin position="384"/>
        <end position="391"/>
    </location>
</feature>
<feature type="strand" evidence="7">
    <location>
        <begin position="412"/>
        <end position="415"/>
    </location>
</feature>
<feature type="helix" evidence="7">
    <location>
        <begin position="419"/>
        <end position="421"/>
    </location>
</feature>
<feature type="strand" evidence="7">
    <location>
        <begin position="422"/>
        <end position="424"/>
    </location>
</feature>
<accession>Q9I739</accession>
<evidence type="ECO:0000255" key="1"/>
<evidence type="ECO:0000269" key="2">
    <source>
    </source>
</evidence>
<evidence type="ECO:0000269" key="3">
    <source>
    </source>
</evidence>
<evidence type="ECO:0000303" key="4">
    <source>
    </source>
</evidence>
<evidence type="ECO:0007744" key="5">
    <source>
        <dbReference type="PDB" id="4ZV0"/>
    </source>
</evidence>
<evidence type="ECO:0007744" key="6">
    <source>
        <dbReference type="PDB" id="4ZV4"/>
    </source>
</evidence>
<evidence type="ECO:0007829" key="7">
    <source>
        <dbReference type="PDB" id="4ZV0"/>
    </source>
</evidence>
<evidence type="ECO:0007829" key="8">
    <source>
        <dbReference type="PDB" id="6OX6"/>
    </source>
</evidence>
<evidence type="ECO:0007829" key="9">
    <source>
        <dbReference type="PDB" id="6XRF"/>
    </source>
</evidence>
<comment type="function">
    <text evidence="2 3">Type VI secretion exported toxin that acts as a glycohydrolase on bacterial target cells and degrades the essential dinucleotides NAD(+) and NADP(+), thereby inducing bacteriostasis. The activity resides in the C-terminal region that is initially neutralized by the cognate immunity protein Tsi6.</text>
</comment>
<comment type="catalytic activity">
    <reaction evidence="2">
        <text>NAD(+) + H2O = ADP-D-ribose + nicotinamide + H(+)</text>
        <dbReference type="Rhea" id="RHEA:16301"/>
        <dbReference type="ChEBI" id="CHEBI:15377"/>
        <dbReference type="ChEBI" id="CHEBI:15378"/>
        <dbReference type="ChEBI" id="CHEBI:17154"/>
        <dbReference type="ChEBI" id="CHEBI:57540"/>
        <dbReference type="ChEBI" id="CHEBI:57967"/>
        <dbReference type="EC" id="3.2.2.5"/>
    </reaction>
</comment>
<comment type="subunit">
    <text evidence="2">Interacts with Tsi6, VgrG1a, EagT6 and EF-Tu.</text>
</comment>
<comment type="subcellular location">
    <subcellularLocation>
        <location evidence="1">Membrane</location>
        <topology evidence="1">Multi-pass membrane protein</topology>
    </subcellularLocation>
</comment>